<sequence length="233" mass="26940">MGRGMQKQRFCLDTSAFTEPSVRKALGVKTVTELTDKVMDLIAEARIKLNISCHIPYPTVYNELMGFLENENCPRDVIVKVDTWLVKKTPNRYEIKIPSEIFYEYVKDLRERINKGMRIGEEHIIKATDMVYELSKKHPEMGKNEIINKVLSKTINTFRNKYRSALRVGTLDSAPDLDVLLLAKELDAAVVASDGGIEKWAQRLGLRFVDASDFPFMLEEYLKHNDRHLRIKY</sequence>
<name>RFRNP_METJA</name>
<keyword id="KW-0255">Endonuclease</keyword>
<keyword id="KW-0378">Hydrolase</keyword>
<keyword id="KW-0540">Nuclease</keyword>
<keyword id="KW-1185">Reference proteome</keyword>
<keyword id="KW-0819">tRNA processing</keyword>
<feature type="chain" id="PRO_0000136079" description="RNA-free ribonuclease P">
    <location>
        <begin position="1"/>
        <end position="233"/>
    </location>
</feature>
<evidence type="ECO:0000255" key="1">
    <source>
        <dbReference type="HAMAP-Rule" id="MF_01078"/>
    </source>
</evidence>
<organism>
    <name type="scientific">Methanocaldococcus jannaschii (strain ATCC 43067 / DSM 2661 / JAL-1 / JCM 10045 / NBRC 100440)</name>
    <name type="common">Methanococcus jannaschii</name>
    <dbReference type="NCBI Taxonomy" id="243232"/>
    <lineage>
        <taxon>Archaea</taxon>
        <taxon>Methanobacteriati</taxon>
        <taxon>Methanobacteriota</taxon>
        <taxon>Methanomada group</taxon>
        <taxon>Methanococci</taxon>
        <taxon>Methanococcales</taxon>
        <taxon>Methanocaldococcaceae</taxon>
        <taxon>Methanocaldococcus</taxon>
    </lineage>
</organism>
<comment type="function">
    <text evidence="1">RNA-free RNase P that catalyzes the removal of the 5'-leader sequence from pre-tRNA to produce the mature 5'-terminus.</text>
</comment>
<comment type="catalytic activity">
    <reaction evidence="1">
        <text>Endonucleolytic cleavage of RNA, removing 5'-extranucleotides from tRNA precursor.</text>
        <dbReference type="EC" id="3.1.26.5"/>
    </reaction>
</comment>
<comment type="similarity">
    <text evidence="1">Belongs to the HARP family.</text>
</comment>
<proteinExistence type="inferred from homology"/>
<reference key="1">
    <citation type="journal article" date="1996" name="Science">
        <title>Complete genome sequence of the methanogenic archaeon, Methanococcus jannaschii.</title>
        <authorList>
            <person name="Bult C.J."/>
            <person name="White O."/>
            <person name="Olsen G.J."/>
            <person name="Zhou L."/>
            <person name="Fleischmann R.D."/>
            <person name="Sutton G.G."/>
            <person name="Blake J.A."/>
            <person name="FitzGerald L.M."/>
            <person name="Clayton R.A."/>
            <person name="Gocayne J.D."/>
            <person name="Kerlavage A.R."/>
            <person name="Dougherty B.A."/>
            <person name="Tomb J.-F."/>
            <person name="Adams M.D."/>
            <person name="Reich C.I."/>
            <person name="Overbeek R."/>
            <person name="Kirkness E.F."/>
            <person name="Weinstock K.G."/>
            <person name="Merrick J.M."/>
            <person name="Glodek A."/>
            <person name="Scott J.L."/>
            <person name="Geoghagen N.S.M."/>
            <person name="Weidman J.F."/>
            <person name="Fuhrmann J.L."/>
            <person name="Nguyen D."/>
            <person name="Utterback T.R."/>
            <person name="Kelley J.M."/>
            <person name="Peterson J.D."/>
            <person name="Sadow P.W."/>
            <person name="Hanna M.C."/>
            <person name="Cotton M.D."/>
            <person name="Roberts K.M."/>
            <person name="Hurst M.A."/>
            <person name="Kaine B.P."/>
            <person name="Borodovsky M."/>
            <person name="Klenk H.-P."/>
            <person name="Fraser C.M."/>
            <person name="Smith H.O."/>
            <person name="Woese C.R."/>
            <person name="Venter J.C."/>
        </authorList>
    </citation>
    <scope>NUCLEOTIDE SEQUENCE [LARGE SCALE GENOMIC DNA]</scope>
    <source>
        <strain>ATCC 43067 / DSM 2661 / JAL-1 / JCM 10045 / NBRC 100440</strain>
    </source>
</reference>
<accession>Q58360</accession>
<dbReference type="EC" id="3.1.26.5" evidence="1"/>
<dbReference type="EMBL" id="L77117">
    <property type="protein sequence ID" value="AAB98951.1"/>
    <property type="molecule type" value="Genomic_DNA"/>
</dbReference>
<dbReference type="PIR" id="F64418">
    <property type="entry name" value="F64418"/>
</dbReference>
<dbReference type="SMR" id="Q58360"/>
<dbReference type="STRING" id="243232.MJ_0950"/>
<dbReference type="PaxDb" id="243232-MJ_0950"/>
<dbReference type="EnsemblBacteria" id="AAB98951">
    <property type="protein sequence ID" value="AAB98951"/>
    <property type="gene ID" value="MJ_0950"/>
</dbReference>
<dbReference type="KEGG" id="mja:MJ_0950"/>
<dbReference type="eggNOG" id="arCOG00720">
    <property type="taxonomic scope" value="Archaea"/>
</dbReference>
<dbReference type="HOGENOM" id="CLU_109672_0_0_2"/>
<dbReference type="InParanoid" id="Q58360"/>
<dbReference type="PhylomeDB" id="Q58360"/>
<dbReference type="Proteomes" id="UP000000805">
    <property type="component" value="Chromosome"/>
</dbReference>
<dbReference type="GO" id="GO:0004526">
    <property type="term" value="F:ribonuclease P activity"/>
    <property type="evidence" value="ECO:0007669"/>
    <property type="project" value="UniProtKB-UniRule"/>
</dbReference>
<dbReference type="GO" id="GO:0001682">
    <property type="term" value="P:tRNA 5'-leader removal"/>
    <property type="evidence" value="ECO:0007669"/>
    <property type="project" value="UniProtKB-UniRule"/>
</dbReference>
<dbReference type="CDD" id="cd18691">
    <property type="entry name" value="PIN_VapC-like"/>
    <property type="match status" value="1"/>
</dbReference>
<dbReference type="HAMAP" id="MF_01078">
    <property type="entry name" value="RNA_free_RNase_P"/>
    <property type="match status" value="1"/>
</dbReference>
<dbReference type="InterPro" id="IPR014856">
    <property type="entry name" value="RNA_free_RNase_P"/>
</dbReference>
<dbReference type="NCBIfam" id="NF003340">
    <property type="entry name" value="PRK04358.1-1"/>
    <property type="match status" value="1"/>
</dbReference>
<dbReference type="NCBIfam" id="NF003343">
    <property type="entry name" value="PRK04358.1-4"/>
    <property type="match status" value="1"/>
</dbReference>
<dbReference type="NCBIfam" id="TIGR03875">
    <property type="entry name" value="RNA_lig_partner"/>
    <property type="match status" value="1"/>
</dbReference>
<dbReference type="PANTHER" id="PTHR41173:SF1">
    <property type="entry name" value="RNA-FREE RIBONUCLEASE P"/>
    <property type="match status" value="1"/>
</dbReference>
<dbReference type="PANTHER" id="PTHR41173">
    <property type="entry name" value="UPF0278 PROTEIN TK1425"/>
    <property type="match status" value="1"/>
</dbReference>
<dbReference type="Pfam" id="PF08745">
    <property type="entry name" value="PIN_5"/>
    <property type="match status" value="1"/>
</dbReference>
<gene>
    <name type="ordered locus">MJ0950</name>
</gene>
<protein>
    <recommendedName>
        <fullName evidence="1">RNA-free ribonuclease P</fullName>
        <shortName evidence="1">RNA-free RNase P</shortName>
        <ecNumber evidence="1">3.1.26.5</ecNumber>
    </recommendedName>
    <alternativeName>
        <fullName evidence="1">Protein-only RNase P</fullName>
    </alternativeName>
</protein>